<accession>B5ZAF5</accession>
<name>RUVB_HELPG</name>
<reference key="1">
    <citation type="journal article" date="2009" name="J. Bacteriol.">
        <title>The complete genome sequence of Helicobacter pylori strain G27.</title>
        <authorList>
            <person name="Baltrus D.A."/>
            <person name="Amieva M.R."/>
            <person name="Covacci A."/>
            <person name="Lowe T.M."/>
            <person name="Merrell D.S."/>
            <person name="Ottemann K.M."/>
            <person name="Stein M."/>
            <person name="Salama N.R."/>
            <person name="Guillemin K."/>
        </authorList>
    </citation>
    <scope>NUCLEOTIDE SEQUENCE [LARGE SCALE GENOMIC DNA]</scope>
    <source>
        <strain>G27</strain>
    </source>
</reference>
<proteinExistence type="inferred from homology"/>
<protein>
    <recommendedName>
        <fullName evidence="1">Holliday junction branch migration complex subunit RuvB</fullName>
        <ecNumber evidence="1">3.6.4.-</ecNumber>
    </recommendedName>
</protein>
<sequence>MKERIVNLETLDFETSQEVSLRPNLWEDFIGQEKIKSNLQISICAAKKRQESLDHMLFFGPPGLGKTSISHIIAKEMETNIKITAAPMIEKSGDLAAILTNLQAKDILFIDEIHRLSPAIEEVLYPAMEDFRLDIIIGSGPAAQTIKIDLPPFTLIGATTRAGMLSNPLRDRFGMSFRMQFYSPSELALIIKKAAVKLNQDIKEESADEIAKRSRGTPRIALRLLKRVRDFALVKNSSLMDLNITLHALNELGVNELGFDEADLAYLSLLANAQGKPVGLNTIAASMREDEGTIEDMIEPFLLANGYLERTAKGRIATPKTHALLKIPTLKSQTLF</sequence>
<keyword id="KW-0067">ATP-binding</keyword>
<keyword id="KW-0963">Cytoplasm</keyword>
<keyword id="KW-0227">DNA damage</keyword>
<keyword id="KW-0233">DNA recombination</keyword>
<keyword id="KW-0234">DNA repair</keyword>
<keyword id="KW-0238">DNA-binding</keyword>
<keyword id="KW-0378">Hydrolase</keyword>
<keyword id="KW-0547">Nucleotide-binding</keyword>
<keyword id="KW-1185">Reference proteome</keyword>
<organism>
    <name type="scientific">Helicobacter pylori (strain G27)</name>
    <dbReference type="NCBI Taxonomy" id="563041"/>
    <lineage>
        <taxon>Bacteria</taxon>
        <taxon>Pseudomonadati</taxon>
        <taxon>Campylobacterota</taxon>
        <taxon>Epsilonproteobacteria</taxon>
        <taxon>Campylobacterales</taxon>
        <taxon>Helicobacteraceae</taxon>
        <taxon>Helicobacter</taxon>
    </lineage>
</organism>
<comment type="function">
    <text evidence="1">The RuvA-RuvB-RuvC complex processes Holliday junction (HJ) DNA during genetic recombination and DNA repair, while the RuvA-RuvB complex plays an important role in the rescue of blocked DNA replication forks via replication fork reversal (RFR). RuvA specifically binds to HJ cruciform DNA, conferring on it an open structure. The RuvB hexamer acts as an ATP-dependent pump, pulling dsDNA into and through the RuvAB complex. RuvB forms 2 homohexamers on either side of HJ DNA bound by 1 or 2 RuvA tetramers; 4 subunits per hexamer contact DNA at a time. Coordinated motions by a converter formed by DNA-disengaged RuvB subunits stimulates ATP hydrolysis and nucleotide exchange. Immobilization of the converter enables RuvB to convert the ATP-contained energy into a lever motion, pulling 2 nucleotides of DNA out of the RuvA tetramer per ATP hydrolyzed, thus driving DNA branch migration. The RuvB motors rotate together with the DNA substrate, which together with the progressing nucleotide cycle form the mechanistic basis for DNA recombination by continuous HJ branch migration. Branch migration allows RuvC to scan DNA until it finds its consensus sequence, where it cleaves and resolves cruciform DNA.</text>
</comment>
<comment type="catalytic activity">
    <reaction evidence="1">
        <text>ATP + H2O = ADP + phosphate + H(+)</text>
        <dbReference type="Rhea" id="RHEA:13065"/>
        <dbReference type="ChEBI" id="CHEBI:15377"/>
        <dbReference type="ChEBI" id="CHEBI:15378"/>
        <dbReference type="ChEBI" id="CHEBI:30616"/>
        <dbReference type="ChEBI" id="CHEBI:43474"/>
        <dbReference type="ChEBI" id="CHEBI:456216"/>
    </reaction>
</comment>
<comment type="subunit">
    <text evidence="1">Homohexamer. Forms an RuvA(8)-RuvB(12)-Holliday junction (HJ) complex. HJ DNA is sandwiched between 2 RuvA tetramers; dsDNA enters through RuvA and exits via RuvB. An RuvB hexamer assembles on each DNA strand where it exits the tetramer. Each RuvB hexamer is contacted by two RuvA subunits (via domain III) on 2 adjacent RuvB subunits; this complex drives branch migration. In the full resolvosome a probable DNA-RuvA(4)-RuvB(12)-RuvC(2) complex forms which resolves the HJ.</text>
</comment>
<comment type="subcellular location">
    <subcellularLocation>
        <location evidence="1">Cytoplasm</location>
    </subcellularLocation>
</comment>
<comment type="domain">
    <text evidence="1">Has 3 domains, the large (RuvB-L) and small ATPase (RuvB-S) domains and the C-terminal head (RuvB-H) domain. The head domain binds DNA, while the ATPase domains jointly bind ATP, ADP or are empty depending on the state of the subunit in the translocation cycle. During a single DNA translocation step the structure of each domain remains the same, but their relative positions change.</text>
</comment>
<comment type="similarity">
    <text evidence="1">Belongs to the RuvB family.</text>
</comment>
<evidence type="ECO:0000255" key="1">
    <source>
        <dbReference type="HAMAP-Rule" id="MF_00016"/>
    </source>
</evidence>
<dbReference type="EC" id="3.6.4.-" evidence="1"/>
<dbReference type="EMBL" id="CP001173">
    <property type="protein sequence ID" value="ACI27135.1"/>
    <property type="molecule type" value="Genomic_DNA"/>
</dbReference>
<dbReference type="RefSeq" id="WP_000664485.1">
    <property type="nucleotide sequence ID" value="NC_011333.1"/>
</dbReference>
<dbReference type="SMR" id="B5ZAF5"/>
<dbReference type="KEGG" id="hpg:HPG27_369"/>
<dbReference type="HOGENOM" id="CLU_055599_1_0_7"/>
<dbReference type="Proteomes" id="UP000001735">
    <property type="component" value="Chromosome"/>
</dbReference>
<dbReference type="GO" id="GO:0005737">
    <property type="term" value="C:cytoplasm"/>
    <property type="evidence" value="ECO:0007669"/>
    <property type="project" value="UniProtKB-SubCell"/>
</dbReference>
<dbReference type="GO" id="GO:0048476">
    <property type="term" value="C:Holliday junction resolvase complex"/>
    <property type="evidence" value="ECO:0007669"/>
    <property type="project" value="UniProtKB-UniRule"/>
</dbReference>
<dbReference type="GO" id="GO:0005524">
    <property type="term" value="F:ATP binding"/>
    <property type="evidence" value="ECO:0007669"/>
    <property type="project" value="UniProtKB-UniRule"/>
</dbReference>
<dbReference type="GO" id="GO:0016887">
    <property type="term" value="F:ATP hydrolysis activity"/>
    <property type="evidence" value="ECO:0007669"/>
    <property type="project" value="InterPro"/>
</dbReference>
<dbReference type="GO" id="GO:0000400">
    <property type="term" value="F:four-way junction DNA binding"/>
    <property type="evidence" value="ECO:0007669"/>
    <property type="project" value="UniProtKB-UniRule"/>
</dbReference>
<dbReference type="GO" id="GO:0009378">
    <property type="term" value="F:four-way junction helicase activity"/>
    <property type="evidence" value="ECO:0007669"/>
    <property type="project" value="InterPro"/>
</dbReference>
<dbReference type="GO" id="GO:0006310">
    <property type="term" value="P:DNA recombination"/>
    <property type="evidence" value="ECO:0007669"/>
    <property type="project" value="UniProtKB-UniRule"/>
</dbReference>
<dbReference type="GO" id="GO:0006281">
    <property type="term" value="P:DNA repair"/>
    <property type="evidence" value="ECO:0007669"/>
    <property type="project" value="UniProtKB-UniRule"/>
</dbReference>
<dbReference type="CDD" id="cd00009">
    <property type="entry name" value="AAA"/>
    <property type="match status" value="1"/>
</dbReference>
<dbReference type="Gene3D" id="1.10.8.60">
    <property type="match status" value="1"/>
</dbReference>
<dbReference type="Gene3D" id="3.40.50.300">
    <property type="entry name" value="P-loop containing nucleotide triphosphate hydrolases"/>
    <property type="match status" value="1"/>
</dbReference>
<dbReference type="Gene3D" id="1.10.10.10">
    <property type="entry name" value="Winged helix-like DNA-binding domain superfamily/Winged helix DNA-binding domain"/>
    <property type="match status" value="1"/>
</dbReference>
<dbReference type="HAMAP" id="MF_00016">
    <property type="entry name" value="DNA_HJ_migration_RuvB"/>
    <property type="match status" value="1"/>
</dbReference>
<dbReference type="InterPro" id="IPR003593">
    <property type="entry name" value="AAA+_ATPase"/>
</dbReference>
<dbReference type="InterPro" id="IPR041445">
    <property type="entry name" value="AAA_lid_4"/>
</dbReference>
<dbReference type="InterPro" id="IPR004605">
    <property type="entry name" value="DNA_helicase_Holl-junc_RuvB"/>
</dbReference>
<dbReference type="InterPro" id="IPR027417">
    <property type="entry name" value="P-loop_NTPase"/>
</dbReference>
<dbReference type="InterPro" id="IPR008824">
    <property type="entry name" value="RuvB-like_N"/>
</dbReference>
<dbReference type="InterPro" id="IPR008823">
    <property type="entry name" value="RuvB_C"/>
</dbReference>
<dbReference type="InterPro" id="IPR036388">
    <property type="entry name" value="WH-like_DNA-bd_sf"/>
</dbReference>
<dbReference type="InterPro" id="IPR036390">
    <property type="entry name" value="WH_DNA-bd_sf"/>
</dbReference>
<dbReference type="NCBIfam" id="NF000868">
    <property type="entry name" value="PRK00080.1"/>
    <property type="match status" value="1"/>
</dbReference>
<dbReference type="NCBIfam" id="TIGR00635">
    <property type="entry name" value="ruvB"/>
    <property type="match status" value="1"/>
</dbReference>
<dbReference type="PANTHER" id="PTHR42848">
    <property type="match status" value="1"/>
</dbReference>
<dbReference type="PANTHER" id="PTHR42848:SF1">
    <property type="entry name" value="HOLLIDAY JUNCTION BRANCH MIGRATION COMPLEX SUBUNIT RUVB"/>
    <property type="match status" value="1"/>
</dbReference>
<dbReference type="Pfam" id="PF17864">
    <property type="entry name" value="AAA_lid_4"/>
    <property type="match status" value="1"/>
</dbReference>
<dbReference type="Pfam" id="PF05491">
    <property type="entry name" value="RuvB_C"/>
    <property type="match status" value="1"/>
</dbReference>
<dbReference type="Pfam" id="PF05496">
    <property type="entry name" value="RuvB_N"/>
    <property type="match status" value="1"/>
</dbReference>
<dbReference type="SMART" id="SM00382">
    <property type="entry name" value="AAA"/>
    <property type="match status" value="1"/>
</dbReference>
<dbReference type="SUPFAM" id="SSF52540">
    <property type="entry name" value="P-loop containing nucleoside triphosphate hydrolases"/>
    <property type="match status" value="1"/>
</dbReference>
<dbReference type="SUPFAM" id="SSF46785">
    <property type="entry name" value="Winged helix' DNA-binding domain"/>
    <property type="match status" value="1"/>
</dbReference>
<gene>
    <name evidence="1" type="primary">ruvB</name>
    <name type="ordered locus">HPG27_369</name>
</gene>
<feature type="chain" id="PRO_1000089651" description="Holliday junction branch migration complex subunit RuvB">
    <location>
        <begin position="1"/>
        <end position="336"/>
    </location>
</feature>
<feature type="region of interest" description="Large ATPase domain (RuvB-L)" evidence="1">
    <location>
        <begin position="1"/>
        <end position="182"/>
    </location>
</feature>
<feature type="region of interest" description="Small ATPAse domain (RuvB-S)" evidence="1">
    <location>
        <begin position="183"/>
        <end position="253"/>
    </location>
</feature>
<feature type="region of interest" description="Head domain (RuvB-H)" evidence="1">
    <location>
        <begin position="256"/>
        <end position="336"/>
    </location>
</feature>
<feature type="binding site" evidence="1">
    <location>
        <position position="21"/>
    </location>
    <ligand>
        <name>ATP</name>
        <dbReference type="ChEBI" id="CHEBI:30616"/>
    </ligand>
</feature>
<feature type="binding site" evidence="1">
    <location>
        <position position="22"/>
    </location>
    <ligand>
        <name>ATP</name>
        <dbReference type="ChEBI" id="CHEBI:30616"/>
    </ligand>
</feature>
<feature type="binding site" evidence="1">
    <location>
        <position position="63"/>
    </location>
    <ligand>
        <name>ATP</name>
        <dbReference type="ChEBI" id="CHEBI:30616"/>
    </ligand>
</feature>
<feature type="binding site" evidence="1">
    <location>
        <position position="66"/>
    </location>
    <ligand>
        <name>ATP</name>
        <dbReference type="ChEBI" id="CHEBI:30616"/>
    </ligand>
</feature>
<feature type="binding site" evidence="1">
    <location>
        <position position="67"/>
    </location>
    <ligand>
        <name>ATP</name>
        <dbReference type="ChEBI" id="CHEBI:30616"/>
    </ligand>
</feature>
<feature type="binding site" evidence="1">
    <location>
        <position position="67"/>
    </location>
    <ligand>
        <name>Mg(2+)</name>
        <dbReference type="ChEBI" id="CHEBI:18420"/>
    </ligand>
</feature>
<feature type="binding site" evidence="1">
    <location>
        <position position="68"/>
    </location>
    <ligand>
        <name>ATP</name>
        <dbReference type="ChEBI" id="CHEBI:30616"/>
    </ligand>
</feature>
<feature type="binding site" evidence="1">
    <location>
        <begin position="129"/>
        <end position="131"/>
    </location>
    <ligand>
        <name>ATP</name>
        <dbReference type="ChEBI" id="CHEBI:30616"/>
    </ligand>
</feature>
<feature type="binding site" evidence="1">
    <location>
        <position position="172"/>
    </location>
    <ligand>
        <name>ATP</name>
        <dbReference type="ChEBI" id="CHEBI:30616"/>
    </ligand>
</feature>
<feature type="binding site" evidence="1">
    <location>
        <position position="182"/>
    </location>
    <ligand>
        <name>ATP</name>
        <dbReference type="ChEBI" id="CHEBI:30616"/>
    </ligand>
</feature>
<feature type="binding site" evidence="1">
    <location>
        <position position="219"/>
    </location>
    <ligand>
        <name>ATP</name>
        <dbReference type="ChEBI" id="CHEBI:30616"/>
    </ligand>
</feature>
<feature type="binding site" evidence="1">
    <location>
        <position position="310"/>
    </location>
    <ligand>
        <name>DNA</name>
        <dbReference type="ChEBI" id="CHEBI:16991"/>
    </ligand>
</feature>
<feature type="binding site" evidence="1">
    <location>
        <position position="315"/>
    </location>
    <ligand>
        <name>DNA</name>
        <dbReference type="ChEBI" id="CHEBI:16991"/>
    </ligand>
</feature>